<reference key="1">
    <citation type="journal article" date="2004" name="Nat. Genet.">
        <title>Complete sequencing and characterization of 21,243 full-length human cDNAs.</title>
        <authorList>
            <person name="Ota T."/>
            <person name="Suzuki Y."/>
            <person name="Nishikawa T."/>
            <person name="Otsuki T."/>
            <person name="Sugiyama T."/>
            <person name="Irie R."/>
            <person name="Wakamatsu A."/>
            <person name="Hayashi K."/>
            <person name="Sato H."/>
            <person name="Nagai K."/>
            <person name="Kimura K."/>
            <person name="Makita H."/>
            <person name="Sekine M."/>
            <person name="Obayashi M."/>
            <person name="Nishi T."/>
            <person name="Shibahara T."/>
            <person name="Tanaka T."/>
            <person name="Ishii S."/>
            <person name="Yamamoto J."/>
            <person name="Saito K."/>
            <person name="Kawai Y."/>
            <person name="Isono Y."/>
            <person name="Nakamura Y."/>
            <person name="Nagahari K."/>
            <person name="Murakami K."/>
            <person name="Yasuda T."/>
            <person name="Iwayanagi T."/>
            <person name="Wagatsuma M."/>
            <person name="Shiratori A."/>
            <person name="Sudo H."/>
            <person name="Hosoiri T."/>
            <person name="Kaku Y."/>
            <person name="Kodaira H."/>
            <person name="Kondo H."/>
            <person name="Sugawara M."/>
            <person name="Takahashi M."/>
            <person name="Kanda K."/>
            <person name="Yokoi T."/>
            <person name="Furuya T."/>
            <person name="Kikkawa E."/>
            <person name="Omura Y."/>
            <person name="Abe K."/>
            <person name="Kamihara K."/>
            <person name="Katsuta N."/>
            <person name="Sato K."/>
            <person name="Tanikawa M."/>
            <person name="Yamazaki M."/>
            <person name="Ninomiya K."/>
            <person name="Ishibashi T."/>
            <person name="Yamashita H."/>
            <person name="Murakawa K."/>
            <person name="Fujimori K."/>
            <person name="Tanai H."/>
            <person name="Kimata M."/>
            <person name="Watanabe M."/>
            <person name="Hiraoka S."/>
            <person name="Chiba Y."/>
            <person name="Ishida S."/>
            <person name="Ono Y."/>
            <person name="Takiguchi S."/>
            <person name="Watanabe S."/>
            <person name="Yosida M."/>
            <person name="Hotuta T."/>
            <person name="Kusano J."/>
            <person name="Kanehori K."/>
            <person name="Takahashi-Fujii A."/>
            <person name="Hara H."/>
            <person name="Tanase T.-O."/>
            <person name="Nomura Y."/>
            <person name="Togiya S."/>
            <person name="Komai F."/>
            <person name="Hara R."/>
            <person name="Takeuchi K."/>
            <person name="Arita M."/>
            <person name="Imose N."/>
            <person name="Musashino K."/>
            <person name="Yuuki H."/>
            <person name="Oshima A."/>
            <person name="Sasaki N."/>
            <person name="Aotsuka S."/>
            <person name="Yoshikawa Y."/>
            <person name="Matsunawa H."/>
            <person name="Ichihara T."/>
            <person name="Shiohata N."/>
            <person name="Sano S."/>
            <person name="Moriya S."/>
            <person name="Momiyama H."/>
            <person name="Satoh N."/>
            <person name="Takami S."/>
            <person name="Terashima Y."/>
            <person name="Suzuki O."/>
            <person name="Nakagawa S."/>
            <person name="Senoh A."/>
            <person name="Mizoguchi H."/>
            <person name="Goto Y."/>
            <person name="Shimizu F."/>
            <person name="Wakebe H."/>
            <person name="Hishigaki H."/>
            <person name="Watanabe T."/>
            <person name="Sugiyama A."/>
            <person name="Takemoto M."/>
            <person name="Kawakami B."/>
            <person name="Yamazaki M."/>
            <person name="Watanabe K."/>
            <person name="Kumagai A."/>
            <person name="Itakura S."/>
            <person name="Fukuzumi Y."/>
            <person name="Fujimori Y."/>
            <person name="Komiyama M."/>
            <person name="Tashiro H."/>
            <person name="Tanigami A."/>
            <person name="Fujiwara T."/>
            <person name="Ono T."/>
            <person name="Yamada K."/>
            <person name="Fujii Y."/>
            <person name="Ozaki K."/>
            <person name="Hirao M."/>
            <person name="Ohmori Y."/>
            <person name="Kawabata A."/>
            <person name="Hikiji T."/>
            <person name="Kobatake N."/>
            <person name="Inagaki H."/>
            <person name="Ikema Y."/>
            <person name="Okamoto S."/>
            <person name="Okitani R."/>
            <person name="Kawakami T."/>
            <person name="Noguchi S."/>
            <person name="Itoh T."/>
            <person name="Shigeta K."/>
            <person name="Senba T."/>
            <person name="Matsumura K."/>
            <person name="Nakajima Y."/>
            <person name="Mizuno T."/>
            <person name="Morinaga M."/>
            <person name="Sasaki M."/>
            <person name="Togashi T."/>
            <person name="Oyama M."/>
            <person name="Hata H."/>
            <person name="Watanabe M."/>
            <person name="Komatsu T."/>
            <person name="Mizushima-Sugano J."/>
            <person name="Satoh T."/>
            <person name="Shirai Y."/>
            <person name="Takahashi Y."/>
            <person name="Nakagawa K."/>
            <person name="Okumura K."/>
            <person name="Nagase T."/>
            <person name="Nomura N."/>
            <person name="Kikuchi H."/>
            <person name="Masuho Y."/>
            <person name="Yamashita R."/>
            <person name="Nakai K."/>
            <person name="Yada T."/>
            <person name="Nakamura Y."/>
            <person name="Ohara O."/>
            <person name="Isogai T."/>
            <person name="Sugano S."/>
        </authorList>
    </citation>
    <scope>NUCLEOTIDE SEQUENCE [LARGE SCALE MRNA]</scope>
    <source>
        <tissue>Brain</tissue>
    </source>
</reference>
<reference key="2">
    <citation type="journal article" date="2006" name="Nature">
        <title>The DNA sequence and biological annotation of human chromosome 1.</title>
        <authorList>
            <person name="Gregory S.G."/>
            <person name="Barlow K.F."/>
            <person name="McLay K.E."/>
            <person name="Kaul R."/>
            <person name="Swarbreck D."/>
            <person name="Dunham A."/>
            <person name="Scott C.E."/>
            <person name="Howe K.L."/>
            <person name="Woodfine K."/>
            <person name="Spencer C.C.A."/>
            <person name="Jones M.C."/>
            <person name="Gillson C."/>
            <person name="Searle S."/>
            <person name="Zhou Y."/>
            <person name="Kokocinski F."/>
            <person name="McDonald L."/>
            <person name="Evans R."/>
            <person name="Phillips K."/>
            <person name="Atkinson A."/>
            <person name="Cooper R."/>
            <person name="Jones C."/>
            <person name="Hall R.E."/>
            <person name="Andrews T.D."/>
            <person name="Lloyd C."/>
            <person name="Ainscough R."/>
            <person name="Almeida J.P."/>
            <person name="Ambrose K.D."/>
            <person name="Anderson F."/>
            <person name="Andrew R.W."/>
            <person name="Ashwell R.I.S."/>
            <person name="Aubin K."/>
            <person name="Babbage A.K."/>
            <person name="Bagguley C.L."/>
            <person name="Bailey J."/>
            <person name="Beasley H."/>
            <person name="Bethel G."/>
            <person name="Bird C.P."/>
            <person name="Bray-Allen S."/>
            <person name="Brown J.Y."/>
            <person name="Brown A.J."/>
            <person name="Buckley D."/>
            <person name="Burton J."/>
            <person name="Bye J."/>
            <person name="Carder C."/>
            <person name="Chapman J.C."/>
            <person name="Clark S.Y."/>
            <person name="Clarke G."/>
            <person name="Clee C."/>
            <person name="Cobley V."/>
            <person name="Collier R.E."/>
            <person name="Corby N."/>
            <person name="Coville G.J."/>
            <person name="Davies J."/>
            <person name="Deadman R."/>
            <person name="Dunn M."/>
            <person name="Earthrowl M."/>
            <person name="Ellington A.G."/>
            <person name="Errington H."/>
            <person name="Frankish A."/>
            <person name="Frankland J."/>
            <person name="French L."/>
            <person name="Garner P."/>
            <person name="Garnett J."/>
            <person name="Gay L."/>
            <person name="Ghori M.R.J."/>
            <person name="Gibson R."/>
            <person name="Gilby L.M."/>
            <person name="Gillett W."/>
            <person name="Glithero R.J."/>
            <person name="Grafham D.V."/>
            <person name="Griffiths C."/>
            <person name="Griffiths-Jones S."/>
            <person name="Grocock R."/>
            <person name="Hammond S."/>
            <person name="Harrison E.S.I."/>
            <person name="Hart E."/>
            <person name="Haugen E."/>
            <person name="Heath P.D."/>
            <person name="Holmes S."/>
            <person name="Holt K."/>
            <person name="Howden P.J."/>
            <person name="Hunt A.R."/>
            <person name="Hunt S.E."/>
            <person name="Hunter G."/>
            <person name="Isherwood J."/>
            <person name="James R."/>
            <person name="Johnson C."/>
            <person name="Johnson D."/>
            <person name="Joy A."/>
            <person name="Kay M."/>
            <person name="Kershaw J.K."/>
            <person name="Kibukawa M."/>
            <person name="Kimberley A.M."/>
            <person name="King A."/>
            <person name="Knights A.J."/>
            <person name="Lad H."/>
            <person name="Laird G."/>
            <person name="Lawlor S."/>
            <person name="Leongamornlert D.A."/>
            <person name="Lloyd D.M."/>
            <person name="Loveland J."/>
            <person name="Lovell J."/>
            <person name="Lush M.J."/>
            <person name="Lyne R."/>
            <person name="Martin S."/>
            <person name="Mashreghi-Mohammadi M."/>
            <person name="Matthews L."/>
            <person name="Matthews N.S.W."/>
            <person name="McLaren S."/>
            <person name="Milne S."/>
            <person name="Mistry S."/>
            <person name="Moore M.J.F."/>
            <person name="Nickerson T."/>
            <person name="O'Dell C.N."/>
            <person name="Oliver K."/>
            <person name="Palmeiri A."/>
            <person name="Palmer S.A."/>
            <person name="Parker A."/>
            <person name="Patel D."/>
            <person name="Pearce A.V."/>
            <person name="Peck A.I."/>
            <person name="Pelan S."/>
            <person name="Phelps K."/>
            <person name="Phillimore B.J."/>
            <person name="Plumb R."/>
            <person name="Rajan J."/>
            <person name="Raymond C."/>
            <person name="Rouse G."/>
            <person name="Saenphimmachak C."/>
            <person name="Sehra H.K."/>
            <person name="Sheridan E."/>
            <person name="Shownkeen R."/>
            <person name="Sims S."/>
            <person name="Skuce C.D."/>
            <person name="Smith M."/>
            <person name="Steward C."/>
            <person name="Subramanian S."/>
            <person name="Sycamore N."/>
            <person name="Tracey A."/>
            <person name="Tromans A."/>
            <person name="Van Helmond Z."/>
            <person name="Wall M."/>
            <person name="Wallis J.M."/>
            <person name="White S."/>
            <person name="Whitehead S.L."/>
            <person name="Wilkinson J.E."/>
            <person name="Willey D.L."/>
            <person name="Williams H."/>
            <person name="Wilming L."/>
            <person name="Wray P.W."/>
            <person name="Wu Z."/>
            <person name="Coulson A."/>
            <person name="Vaudin M."/>
            <person name="Sulston J.E."/>
            <person name="Durbin R.M."/>
            <person name="Hubbard T."/>
            <person name="Wooster R."/>
            <person name="Dunham I."/>
            <person name="Carter N.P."/>
            <person name="McVean G."/>
            <person name="Ross M.T."/>
            <person name="Harrow J."/>
            <person name="Olson M.V."/>
            <person name="Beck S."/>
            <person name="Rogers J."/>
            <person name="Bentley D.R."/>
        </authorList>
    </citation>
    <scope>NUCLEOTIDE SEQUENCE [LARGE SCALE GENOMIC DNA]</scope>
</reference>
<sequence length="235" mass="25086">MGMLAPGPLQGRRPRKGHKGQEDAVAPGCKASGRGSRVTHLLGYPTQNVSRSLRRKYAPPPCGGPEDVALAPCTAAAACEAGPSPVYVKVKSAEPADCAEGPVQCKNGLLVSSPHCEEPCAHSCAHPGLPPHLVHKLPLSYLQTQDTDAASRRINAPLAAGWSWLRLWLVTLASGVDFPQVSAWMRALPSPDCPGLRTTGEQMQKLLLKENKVKTRKSKRRSGEGSHLTTSILEQ</sequence>
<gene>
    <name evidence="3" type="primary">SNHG28</name>
    <name type="synonym">C1orf204</name>
</gene>
<evidence type="ECO:0000256" key="1">
    <source>
        <dbReference type="SAM" id="MobiDB-lite"/>
    </source>
</evidence>
<evidence type="ECO:0000305" key="2"/>
<evidence type="ECO:0000312" key="3">
    <source>
        <dbReference type="HGNC" id="HGNC:27647"/>
    </source>
</evidence>
<name>SNH28_HUMAN</name>
<keyword id="KW-1185">Reference proteome</keyword>
<accession>P0DPA3</accession>
<accession>Q5VU13</accession>
<accession>Q5VU14</accession>
<organism>
    <name type="scientific">Homo sapiens</name>
    <name type="common">Human</name>
    <dbReference type="NCBI Taxonomy" id="9606"/>
    <lineage>
        <taxon>Eukaryota</taxon>
        <taxon>Metazoa</taxon>
        <taxon>Chordata</taxon>
        <taxon>Craniata</taxon>
        <taxon>Vertebrata</taxon>
        <taxon>Euteleostomi</taxon>
        <taxon>Mammalia</taxon>
        <taxon>Eutheria</taxon>
        <taxon>Euarchontoglires</taxon>
        <taxon>Primates</taxon>
        <taxon>Haplorrhini</taxon>
        <taxon>Catarrhini</taxon>
        <taxon>Hominidae</taxon>
        <taxon>Homo</taxon>
    </lineage>
</organism>
<proteinExistence type="uncertain"/>
<comment type="caution">
    <text evidence="2">Product of a dubious CDS prediction. May be a non-coding RNA.</text>
</comment>
<protein>
    <recommendedName>
        <fullName>Putative uncharacterized protein SNHG28</fullName>
    </recommendedName>
    <alternativeName>
        <fullName>Small nucleolar RNA host gene 2</fullName>
    </alternativeName>
    <alternativeName>
        <fullName>VSIG8 overlapping transcript protein</fullName>
        <shortName>VSIG8-OT1</shortName>
    </alternativeName>
</protein>
<dbReference type="EMBL" id="AK096506">
    <property type="status" value="NOT_ANNOTATED_CDS"/>
    <property type="molecule type" value="mRNA"/>
</dbReference>
<dbReference type="EMBL" id="AL590560">
    <property type="status" value="NOT_ANNOTATED_CDS"/>
    <property type="molecule type" value="Genomic_DNA"/>
</dbReference>
<dbReference type="RefSeq" id="NP_001127705.1">
    <property type="nucleotide sequence ID" value="NM_001134233.1"/>
</dbReference>
<dbReference type="BioMuta" id="SNHG28"/>
<dbReference type="MassIVE" id="P0DPA3"/>
<dbReference type="PaxDb" id="9606-ENSP00000357082"/>
<dbReference type="PeptideAtlas" id="P0DPA3"/>
<dbReference type="AGR" id="HGNC:27647"/>
<dbReference type="GeneCards" id="SNHG28"/>
<dbReference type="HGNC" id="HGNC:27647">
    <property type="gene designation" value="SNHG28"/>
</dbReference>
<dbReference type="neXtProt" id="NX_P0DPA3"/>
<dbReference type="eggNOG" id="ENOG502RXSJ">
    <property type="taxonomic scope" value="Eukaryota"/>
</dbReference>
<dbReference type="InParanoid" id="P0DPA3"/>
<dbReference type="PAN-GO" id="P0DPA3">
    <property type="GO annotations" value="0 GO annotations based on evolutionary models"/>
</dbReference>
<dbReference type="Pharos" id="P0DPA3">
    <property type="development level" value="Tdark"/>
</dbReference>
<dbReference type="Proteomes" id="UP000005640">
    <property type="component" value="Unplaced"/>
</dbReference>
<dbReference type="RNAct" id="P0DPA3">
    <property type="molecule type" value="protein"/>
</dbReference>
<dbReference type="GO" id="GO:0003723">
    <property type="term" value="F:RNA binding"/>
    <property type="evidence" value="ECO:0007005"/>
    <property type="project" value="UniProtKB"/>
</dbReference>
<dbReference type="InterPro" id="IPR052871">
    <property type="entry name" value="V-set/Ig_domain"/>
</dbReference>
<dbReference type="PANTHER" id="PTHR45166">
    <property type="entry name" value="V-SET AND IMMUNOGLOBULIN DOMAIN-CONTAINING PROTEIN 8"/>
    <property type="match status" value="1"/>
</dbReference>
<dbReference type="PANTHER" id="PTHR45166:SF1">
    <property type="entry name" value="V-SET AND IMMUNOGLOBULIN DOMAIN-CONTAINING PROTEIN 8"/>
    <property type="match status" value="1"/>
</dbReference>
<feature type="chain" id="PRO_0000442103" description="Putative uncharacterized protein SNHG28">
    <location>
        <begin position="1"/>
        <end position="235"/>
    </location>
</feature>
<feature type="region of interest" description="Disordered" evidence="1">
    <location>
        <begin position="1"/>
        <end position="36"/>
    </location>
</feature>
<feature type="region of interest" description="Disordered" evidence="1">
    <location>
        <begin position="213"/>
        <end position="235"/>
    </location>
</feature>